<proteinExistence type="inferred from homology"/>
<keyword id="KW-0150">Chloroplast</keyword>
<keyword id="KW-0934">Plastid</keyword>
<keyword id="KW-0687">Ribonucleoprotein</keyword>
<keyword id="KW-0689">Ribosomal protein</keyword>
<keyword id="KW-0694">RNA-binding</keyword>
<keyword id="KW-0699">rRNA-binding</keyword>
<accession>P49557</accession>
<protein>
    <recommendedName>
        <fullName evidence="1">Large ribosomal subunit protein bL21c</fullName>
    </recommendedName>
    <alternativeName>
        <fullName evidence="2">50S ribosomal protein L21, chloroplastic</fullName>
    </alternativeName>
</protein>
<sequence>MKYAIVEISGRQFWIETGKYYDFNRIPTELGKEITLNRVLLLNNEGEILIGKPYLESVTVKGKILEHLRGRKTLVYKMRPKKKTRKKQGHRQELTRVLIEEIKTN</sequence>
<feature type="chain" id="PRO_0000181026" description="Large ribosomal subunit protein bL21c">
    <location>
        <begin position="1"/>
        <end position="105"/>
    </location>
</feature>
<dbReference type="EMBL" id="Z67753">
    <property type="protein sequence ID" value="CAA91663.1"/>
    <property type="molecule type" value="Genomic_DNA"/>
</dbReference>
<dbReference type="PIR" id="S78290">
    <property type="entry name" value="S78290"/>
</dbReference>
<dbReference type="RefSeq" id="NP_043631.1">
    <property type="nucleotide sequence ID" value="NC_001713.1"/>
</dbReference>
<dbReference type="SMR" id="P49557"/>
<dbReference type="GeneID" id="801796"/>
<dbReference type="GO" id="GO:0009507">
    <property type="term" value="C:chloroplast"/>
    <property type="evidence" value="ECO:0007669"/>
    <property type="project" value="UniProtKB-SubCell"/>
</dbReference>
<dbReference type="GO" id="GO:0005762">
    <property type="term" value="C:mitochondrial large ribosomal subunit"/>
    <property type="evidence" value="ECO:0007669"/>
    <property type="project" value="TreeGrafter"/>
</dbReference>
<dbReference type="GO" id="GO:0019843">
    <property type="term" value="F:rRNA binding"/>
    <property type="evidence" value="ECO:0007669"/>
    <property type="project" value="UniProtKB-UniRule"/>
</dbReference>
<dbReference type="GO" id="GO:0003735">
    <property type="term" value="F:structural constituent of ribosome"/>
    <property type="evidence" value="ECO:0007669"/>
    <property type="project" value="InterPro"/>
</dbReference>
<dbReference type="GO" id="GO:0006412">
    <property type="term" value="P:translation"/>
    <property type="evidence" value="ECO:0007669"/>
    <property type="project" value="UniProtKB-UniRule"/>
</dbReference>
<dbReference type="HAMAP" id="MF_01363">
    <property type="entry name" value="Ribosomal_bL21"/>
    <property type="match status" value="1"/>
</dbReference>
<dbReference type="InterPro" id="IPR028909">
    <property type="entry name" value="bL21-like"/>
</dbReference>
<dbReference type="InterPro" id="IPR036164">
    <property type="entry name" value="bL21-like_sf"/>
</dbReference>
<dbReference type="InterPro" id="IPR001787">
    <property type="entry name" value="Ribosomal_bL21"/>
</dbReference>
<dbReference type="InterPro" id="IPR018258">
    <property type="entry name" value="Ribosomal_bL21_CS"/>
</dbReference>
<dbReference type="NCBIfam" id="TIGR00061">
    <property type="entry name" value="L21"/>
    <property type="match status" value="1"/>
</dbReference>
<dbReference type="PANTHER" id="PTHR21349">
    <property type="entry name" value="50S RIBOSOMAL PROTEIN L21"/>
    <property type="match status" value="1"/>
</dbReference>
<dbReference type="PANTHER" id="PTHR21349:SF7">
    <property type="entry name" value="LARGE RIBOSOMAL SUBUNIT PROTEIN BL21C"/>
    <property type="match status" value="1"/>
</dbReference>
<dbReference type="Pfam" id="PF00829">
    <property type="entry name" value="Ribosomal_L21p"/>
    <property type="match status" value="1"/>
</dbReference>
<dbReference type="SUPFAM" id="SSF141091">
    <property type="entry name" value="L21p-like"/>
    <property type="match status" value="1"/>
</dbReference>
<dbReference type="PROSITE" id="PS01169">
    <property type="entry name" value="RIBOSOMAL_L21"/>
    <property type="match status" value="1"/>
</dbReference>
<name>RK21_TRICV</name>
<reference key="1">
    <citation type="journal article" date="1995" name="Plant Mol. Biol. Rep.">
        <title>The chloroplast genome of a chlorophyll a+c-containing alga, Odontella sinensis.</title>
        <authorList>
            <person name="Kowallik K.V."/>
            <person name="Stoebe B."/>
            <person name="Schaffran I."/>
            <person name="Kroth-Pancic P."/>
            <person name="Freier U."/>
        </authorList>
    </citation>
    <scope>NUCLEOTIDE SEQUENCE [LARGE SCALE GENOMIC DNA]</scope>
</reference>
<geneLocation type="chloroplast"/>
<comment type="function">
    <text evidence="1">This protein binds to 23S rRNA.</text>
</comment>
<comment type="subunit">
    <text evidence="1">Part of the 50S ribosomal subunit.</text>
</comment>
<comment type="subcellular location">
    <subcellularLocation>
        <location>Plastid</location>
        <location>Chloroplast</location>
    </subcellularLocation>
</comment>
<comment type="similarity">
    <text evidence="1">Belongs to the bacterial ribosomal protein bL21 family.</text>
</comment>
<evidence type="ECO:0000255" key="1">
    <source>
        <dbReference type="HAMAP-Rule" id="MF_01363"/>
    </source>
</evidence>
<evidence type="ECO:0000305" key="2"/>
<gene>
    <name evidence="1" type="primary">rpl21</name>
</gene>
<organism>
    <name type="scientific">Trieres chinensis</name>
    <name type="common">Marine centric diatom</name>
    <name type="synonym">Odontella sinensis</name>
    <dbReference type="NCBI Taxonomy" id="1514140"/>
    <lineage>
        <taxon>Eukaryota</taxon>
        <taxon>Sar</taxon>
        <taxon>Stramenopiles</taxon>
        <taxon>Ochrophyta</taxon>
        <taxon>Bacillariophyta</taxon>
        <taxon>Mediophyceae</taxon>
        <taxon>Biddulphiophycidae</taxon>
        <taxon>Eupodiscales</taxon>
        <taxon>Parodontellaceae</taxon>
        <taxon>Trieres</taxon>
    </lineage>
</organism>